<organism>
    <name type="scientific">Vibrio cholerae serotype O1 (strain ATCC 39315 / El Tor Inaba N16961)</name>
    <dbReference type="NCBI Taxonomy" id="243277"/>
    <lineage>
        <taxon>Bacteria</taxon>
        <taxon>Pseudomonadati</taxon>
        <taxon>Pseudomonadota</taxon>
        <taxon>Gammaproteobacteria</taxon>
        <taxon>Vibrionales</taxon>
        <taxon>Vibrionaceae</taxon>
        <taxon>Vibrio</taxon>
    </lineage>
</organism>
<accession>Q9KVT3</accession>
<gene>
    <name evidence="1" type="primary">aroE</name>
    <name type="ordered locus">VC_0056</name>
</gene>
<protein>
    <recommendedName>
        <fullName evidence="1">Shikimate dehydrogenase (NADP(+))</fullName>
        <shortName evidence="1">SDH</shortName>
        <ecNumber evidence="1">1.1.1.25</ecNumber>
    </recommendedName>
</protein>
<keyword id="KW-0002">3D-structure</keyword>
<keyword id="KW-0028">Amino-acid biosynthesis</keyword>
<keyword id="KW-0057">Aromatic amino acid biosynthesis</keyword>
<keyword id="KW-0521">NADP</keyword>
<keyword id="KW-0560">Oxidoreductase</keyword>
<keyword id="KW-1185">Reference proteome</keyword>
<name>AROE_VIBCH</name>
<sequence length="278" mass="30250">MASQIDQYAVFGNPINHSKSPFIHTLFARQTQQSMIYTAQCVPVDGFTEAAKHFFAQGGRGCNVTVPFKEEAYRFADRLTERARLAGAVNTLKKLDDGEILGDNTDGEGLVQDLLAQQVLLKGATILLIGAGGAARGVLKPLLDQQPASITVTNRTFAKAEQLAELVAAYGEVKAQAFEQLKQSYDVIINSTSASLDGELPAIDPVIFSSRSVCYDMMYGKGYTVFNQWARQHGCAQAIDGLGMLVGQAAESFMLWRGLRPGTKQILRELRKNLEGAL</sequence>
<comment type="function">
    <text evidence="1">Involved in the biosynthesis of the chorismate, which leads to the biosynthesis of aromatic amino acids. Catalyzes the reversible NADPH linked reduction of 3-dehydroshikimate (DHSA) to yield shikimate (SA).</text>
</comment>
<comment type="catalytic activity">
    <reaction evidence="1">
        <text>shikimate + NADP(+) = 3-dehydroshikimate + NADPH + H(+)</text>
        <dbReference type="Rhea" id="RHEA:17737"/>
        <dbReference type="ChEBI" id="CHEBI:15378"/>
        <dbReference type="ChEBI" id="CHEBI:16630"/>
        <dbReference type="ChEBI" id="CHEBI:36208"/>
        <dbReference type="ChEBI" id="CHEBI:57783"/>
        <dbReference type="ChEBI" id="CHEBI:58349"/>
        <dbReference type="EC" id="1.1.1.25"/>
    </reaction>
</comment>
<comment type="pathway">
    <text evidence="1">Metabolic intermediate biosynthesis; chorismate biosynthesis; chorismate from D-erythrose 4-phosphate and phosphoenolpyruvate: step 4/7.</text>
</comment>
<comment type="subunit">
    <text evidence="1 2 3">Homodimer or homotetramer.</text>
</comment>
<comment type="similarity">
    <text evidence="1">Belongs to the shikimate dehydrogenase family.</text>
</comment>
<reference key="1">
    <citation type="journal article" date="2000" name="Nature">
        <title>DNA sequence of both chromosomes of the cholera pathogen Vibrio cholerae.</title>
        <authorList>
            <person name="Heidelberg J.F."/>
            <person name="Eisen J.A."/>
            <person name="Nelson W.C."/>
            <person name="Clayton R.A."/>
            <person name="Gwinn M.L."/>
            <person name="Dodson R.J."/>
            <person name="Haft D.H."/>
            <person name="Hickey E.K."/>
            <person name="Peterson J.D."/>
            <person name="Umayam L.A."/>
            <person name="Gill S.R."/>
            <person name="Nelson K.E."/>
            <person name="Read T.D."/>
            <person name="Tettelin H."/>
            <person name="Richardson D.L."/>
            <person name="Ermolaeva M.D."/>
            <person name="Vamathevan J.J."/>
            <person name="Bass S."/>
            <person name="Qin H."/>
            <person name="Dragoi I."/>
            <person name="Sellers P."/>
            <person name="McDonald L.A."/>
            <person name="Utterback T.R."/>
            <person name="Fleischmann R.D."/>
            <person name="Nierman W.C."/>
            <person name="White O."/>
            <person name="Salzberg S.L."/>
            <person name="Smith H.O."/>
            <person name="Colwell R.R."/>
            <person name="Mekalanos J.J."/>
            <person name="Venter J.C."/>
            <person name="Fraser C.M."/>
        </authorList>
    </citation>
    <scope>NUCLEOTIDE SEQUENCE [LARGE SCALE GENOMIC DNA]</scope>
    <source>
        <strain>ATCC 39315 / El Tor Inaba N16961</strain>
    </source>
</reference>
<reference key="2">
    <citation type="submission" date="2010-11" db="PDB data bank">
        <title>2.49 Angstrom resolution crystal structure of shikimate 5-dehydrogenase (aroE) from Vibrio cholerae O1 biovar eltor str. N16961 in complex with shikimate.</title>
        <authorList>
            <person name="Halavaty A.S."/>
            <person name="Light S.H."/>
            <person name="Shuvalova L."/>
            <person name="Papazisi L."/>
            <person name="Anderson W.F."/>
        </authorList>
    </citation>
    <scope>X-RAY CRYSTALLOGRAPHY (2.49 ANGSTROMS) IN COMPLEX WITH SHIKIMATE</scope>
    <scope>SUBUNIT</scope>
</reference>
<reference key="3">
    <citation type="submission" date="2011-06" db="PDB data bank">
        <title>2.4 Angstrom resolution crystal structure of shikimate 5-dehydrogenase (aroE) from Vibrio cholerae O1 biovar eltor str. N16961 in complex with shikimate and NADPH.</title>
        <authorList>
            <person name="Halavaty A.S."/>
            <person name="Light S.H."/>
            <person name="Minasov G."/>
            <person name="Shuvalova L."/>
            <person name="Papazisi L."/>
            <person name="Anderson W.F."/>
        </authorList>
    </citation>
    <scope>X-RAY CRYSTALLOGRAPHY (2.40 ANGSTROMS) IN COMPLEX WITH SHIKIMATE AND NADP</scope>
    <scope>SUBUNIT</scope>
</reference>
<proteinExistence type="evidence at protein level"/>
<dbReference type="EC" id="1.1.1.25" evidence="1"/>
<dbReference type="EMBL" id="AE003852">
    <property type="protein sequence ID" value="AAF93234.1"/>
    <property type="molecule type" value="Genomic_DNA"/>
</dbReference>
<dbReference type="PIR" id="G82370">
    <property type="entry name" value="G82370"/>
</dbReference>
<dbReference type="RefSeq" id="NP_229715.1">
    <property type="nucleotide sequence ID" value="NC_002505.1"/>
</dbReference>
<dbReference type="RefSeq" id="WP_000168154.1">
    <property type="nucleotide sequence ID" value="NZ_LT906614.1"/>
</dbReference>
<dbReference type="PDB" id="3PGJ">
    <property type="method" value="X-ray"/>
    <property type="resolution" value="2.49 A"/>
    <property type="chains" value="A/B/C/D=1-278"/>
</dbReference>
<dbReference type="PDB" id="3SEF">
    <property type="method" value="X-ray"/>
    <property type="resolution" value="2.40 A"/>
    <property type="chains" value="A/B/C/D=1-278"/>
</dbReference>
<dbReference type="PDBsum" id="3PGJ"/>
<dbReference type="PDBsum" id="3SEF"/>
<dbReference type="SMR" id="Q9KVT3"/>
<dbReference type="STRING" id="243277.VC_0056"/>
<dbReference type="DNASU" id="2614442"/>
<dbReference type="EnsemblBacteria" id="AAF93234">
    <property type="protein sequence ID" value="AAF93234"/>
    <property type="gene ID" value="VC_0056"/>
</dbReference>
<dbReference type="KEGG" id="vch:VC_0056"/>
<dbReference type="PATRIC" id="fig|243277.26.peg.54"/>
<dbReference type="eggNOG" id="COG0169">
    <property type="taxonomic scope" value="Bacteria"/>
</dbReference>
<dbReference type="HOGENOM" id="CLU_044063_2_1_6"/>
<dbReference type="UniPathway" id="UPA00053">
    <property type="reaction ID" value="UER00087"/>
</dbReference>
<dbReference type="EvolutionaryTrace" id="Q9KVT3"/>
<dbReference type="Proteomes" id="UP000000584">
    <property type="component" value="Chromosome 1"/>
</dbReference>
<dbReference type="GO" id="GO:0005829">
    <property type="term" value="C:cytosol"/>
    <property type="evidence" value="ECO:0000318"/>
    <property type="project" value="GO_Central"/>
</dbReference>
<dbReference type="GO" id="GO:0050661">
    <property type="term" value="F:NADP binding"/>
    <property type="evidence" value="ECO:0000318"/>
    <property type="project" value="GO_Central"/>
</dbReference>
<dbReference type="GO" id="GO:0004764">
    <property type="term" value="F:shikimate 3-dehydrogenase (NADP+) activity"/>
    <property type="evidence" value="ECO:0000318"/>
    <property type="project" value="GO_Central"/>
</dbReference>
<dbReference type="GO" id="GO:0008652">
    <property type="term" value="P:amino acid biosynthetic process"/>
    <property type="evidence" value="ECO:0007669"/>
    <property type="project" value="UniProtKB-KW"/>
</dbReference>
<dbReference type="GO" id="GO:0009073">
    <property type="term" value="P:aromatic amino acid family biosynthetic process"/>
    <property type="evidence" value="ECO:0007669"/>
    <property type="project" value="UniProtKB-KW"/>
</dbReference>
<dbReference type="GO" id="GO:0009423">
    <property type="term" value="P:chorismate biosynthetic process"/>
    <property type="evidence" value="ECO:0000318"/>
    <property type="project" value="GO_Central"/>
</dbReference>
<dbReference type="GO" id="GO:0019632">
    <property type="term" value="P:shikimate metabolic process"/>
    <property type="evidence" value="ECO:0000318"/>
    <property type="project" value="GO_Central"/>
</dbReference>
<dbReference type="CDD" id="cd01065">
    <property type="entry name" value="NAD_bind_Shikimate_DH"/>
    <property type="match status" value="1"/>
</dbReference>
<dbReference type="FunFam" id="3.40.50.10860:FF:000006">
    <property type="entry name" value="Shikimate dehydrogenase (NADP(+))"/>
    <property type="match status" value="1"/>
</dbReference>
<dbReference type="FunFam" id="3.40.50.720:FF:000104">
    <property type="entry name" value="Shikimate dehydrogenase (NADP(+))"/>
    <property type="match status" value="1"/>
</dbReference>
<dbReference type="Gene3D" id="3.40.50.10860">
    <property type="entry name" value="Leucine Dehydrogenase, chain A, domain 1"/>
    <property type="match status" value="1"/>
</dbReference>
<dbReference type="Gene3D" id="3.40.50.720">
    <property type="entry name" value="NAD(P)-binding Rossmann-like Domain"/>
    <property type="match status" value="1"/>
</dbReference>
<dbReference type="HAMAP" id="MF_00222">
    <property type="entry name" value="Shikimate_DH_AroE"/>
    <property type="match status" value="1"/>
</dbReference>
<dbReference type="InterPro" id="IPR046346">
    <property type="entry name" value="Aminoacid_DH-like_N_sf"/>
</dbReference>
<dbReference type="InterPro" id="IPR036291">
    <property type="entry name" value="NAD(P)-bd_dom_sf"/>
</dbReference>
<dbReference type="InterPro" id="IPR041121">
    <property type="entry name" value="SDH_C"/>
</dbReference>
<dbReference type="InterPro" id="IPR011342">
    <property type="entry name" value="Shikimate_DH"/>
</dbReference>
<dbReference type="InterPro" id="IPR013708">
    <property type="entry name" value="Shikimate_DH-bd_N"/>
</dbReference>
<dbReference type="InterPro" id="IPR022893">
    <property type="entry name" value="Shikimate_DH_fam"/>
</dbReference>
<dbReference type="InterPro" id="IPR006151">
    <property type="entry name" value="Shikm_DH/Glu-tRNA_Rdtase"/>
</dbReference>
<dbReference type="NCBIfam" id="TIGR00507">
    <property type="entry name" value="aroE"/>
    <property type="match status" value="1"/>
</dbReference>
<dbReference type="NCBIfam" id="NF001310">
    <property type="entry name" value="PRK00258.1-2"/>
    <property type="match status" value="1"/>
</dbReference>
<dbReference type="PANTHER" id="PTHR21089:SF1">
    <property type="entry name" value="BIFUNCTIONAL 3-DEHYDROQUINATE DEHYDRATASE_SHIKIMATE DEHYDROGENASE, CHLOROPLASTIC"/>
    <property type="match status" value="1"/>
</dbReference>
<dbReference type="PANTHER" id="PTHR21089">
    <property type="entry name" value="SHIKIMATE DEHYDROGENASE"/>
    <property type="match status" value="1"/>
</dbReference>
<dbReference type="Pfam" id="PF18317">
    <property type="entry name" value="SDH_C"/>
    <property type="match status" value="1"/>
</dbReference>
<dbReference type="Pfam" id="PF01488">
    <property type="entry name" value="Shikimate_DH"/>
    <property type="match status" value="1"/>
</dbReference>
<dbReference type="Pfam" id="PF08501">
    <property type="entry name" value="Shikimate_dh_N"/>
    <property type="match status" value="1"/>
</dbReference>
<dbReference type="SUPFAM" id="SSF53223">
    <property type="entry name" value="Aminoacid dehydrogenase-like, N-terminal domain"/>
    <property type="match status" value="1"/>
</dbReference>
<dbReference type="SUPFAM" id="SSF51735">
    <property type="entry name" value="NAD(P)-binding Rossmann-fold domains"/>
    <property type="match status" value="1"/>
</dbReference>
<evidence type="ECO:0000255" key="1">
    <source>
        <dbReference type="HAMAP-Rule" id="MF_00222"/>
    </source>
</evidence>
<evidence type="ECO:0000269" key="2">
    <source ref="2"/>
</evidence>
<evidence type="ECO:0000269" key="3">
    <source ref="3"/>
</evidence>
<evidence type="ECO:0000305" key="4">
    <source ref="2"/>
</evidence>
<evidence type="ECO:0000305" key="5">
    <source ref="3"/>
</evidence>
<evidence type="ECO:0007829" key="6">
    <source>
        <dbReference type="PDB" id="3SEF"/>
    </source>
</evidence>
<feature type="chain" id="PRO_0000136048" description="Shikimate dehydrogenase (NADP(+))">
    <location>
        <begin position="1"/>
        <end position="278"/>
    </location>
</feature>
<feature type="active site" description="Proton acceptor" evidence="1 4 5">
    <location>
        <position position="69"/>
    </location>
</feature>
<feature type="binding site" evidence="1 2 3">
    <location>
        <begin position="18"/>
        <end position="20"/>
    </location>
    <ligand>
        <name>shikimate</name>
        <dbReference type="ChEBI" id="CHEBI:36208"/>
    </ligand>
</feature>
<feature type="binding site" evidence="1">
    <location>
        <position position="65"/>
    </location>
    <ligand>
        <name>shikimate</name>
        <dbReference type="ChEBI" id="CHEBI:36208"/>
    </ligand>
</feature>
<feature type="binding site" evidence="1">
    <location>
        <position position="81"/>
    </location>
    <ligand>
        <name>NADP(+)</name>
        <dbReference type="ChEBI" id="CHEBI:58349"/>
    </ligand>
</feature>
<feature type="binding site" evidence="1 2">
    <location>
        <position position="90"/>
    </location>
    <ligand>
        <name>shikimate</name>
        <dbReference type="ChEBI" id="CHEBI:36208"/>
    </ligand>
</feature>
<feature type="binding site" evidence="1 2 3">
    <location>
        <position position="106"/>
    </location>
    <ligand>
        <name>shikimate</name>
        <dbReference type="ChEBI" id="CHEBI:36208"/>
    </ligand>
</feature>
<feature type="binding site" evidence="1">
    <location>
        <begin position="130"/>
        <end position="134"/>
    </location>
    <ligand>
        <name>NADP(+)</name>
        <dbReference type="ChEBI" id="CHEBI:58349"/>
    </ligand>
</feature>
<feature type="binding site" evidence="1 3">
    <location>
        <begin position="154"/>
        <end position="159"/>
    </location>
    <ligand>
        <name>NADP(+)</name>
        <dbReference type="ChEBI" id="CHEBI:58349"/>
    </ligand>
</feature>
<feature type="binding site" evidence="1">
    <location>
        <position position="223"/>
    </location>
    <ligand>
        <name>shikimate</name>
        <dbReference type="ChEBI" id="CHEBI:36208"/>
    </ligand>
</feature>
<feature type="binding site" evidence="1">
    <location>
        <position position="241"/>
    </location>
    <ligand>
        <name>NADP(+)</name>
        <dbReference type="ChEBI" id="CHEBI:58349"/>
    </ligand>
</feature>
<feature type="binding site" evidence="1 2">
    <location>
        <position position="248"/>
    </location>
    <ligand>
        <name>shikimate</name>
        <dbReference type="ChEBI" id="CHEBI:36208"/>
    </ligand>
</feature>
<feature type="strand" evidence="6">
    <location>
        <begin position="6"/>
        <end position="12"/>
    </location>
</feature>
<feature type="helix" evidence="6">
    <location>
        <begin position="20"/>
        <end position="30"/>
    </location>
</feature>
<feature type="strand" evidence="6">
    <location>
        <begin position="35"/>
        <end position="41"/>
    </location>
</feature>
<feature type="helix" evidence="6">
    <location>
        <begin position="47"/>
        <end position="56"/>
    </location>
</feature>
<feature type="strand" evidence="6">
    <location>
        <begin position="61"/>
        <end position="64"/>
    </location>
</feature>
<feature type="helix" evidence="6">
    <location>
        <begin position="69"/>
        <end position="75"/>
    </location>
</feature>
<feature type="strand" evidence="6">
    <location>
        <begin position="77"/>
        <end position="79"/>
    </location>
</feature>
<feature type="helix" evidence="6">
    <location>
        <begin position="81"/>
        <end position="86"/>
    </location>
</feature>
<feature type="strand" evidence="6">
    <location>
        <begin position="90"/>
        <end position="94"/>
    </location>
</feature>
<feature type="strand" evidence="6">
    <location>
        <begin position="100"/>
        <end position="103"/>
    </location>
</feature>
<feature type="helix" evidence="6">
    <location>
        <begin position="106"/>
        <end position="116"/>
    </location>
</feature>
<feature type="strand" evidence="6">
    <location>
        <begin position="125"/>
        <end position="129"/>
    </location>
</feature>
<feature type="helix" evidence="6">
    <location>
        <begin position="133"/>
        <end position="144"/>
    </location>
</feature>
<feature type="strand" evidence="6">
    <location>
        <begin position="148"/>
        <end position="153"/>
    </location>
</feature>
<feature type="helix" evidence="6">
    <location>
        <begin position="157"/>
        <end position="166"/>
    </location>
</feature>
<feature type="helix" evidence="6">
    <location>
        <begin position="168"/>
        <end position="170"/>
    </location>
</feature>
<feature type="strand" evidence="6">
    <location>
        <begin position="173"/>
        <end position="176"/>
    </location>
</feature>
<feature type="helix" evidence="6">
    <location>
        <begin position="178"/>
        <end position="180"/>
    </location>
</feature>
<feature type="strand" evidence="6">
    <location>
        <begin position="186"/>
        <end position="190"/>
    </location>
</feature>
<feature type="helix" evidence="6">
    <location>
        <begin position="194"/>
        <end position="197"/>
    </location>
</feature>
<feature type="helix" evidence="6">
    <location>
        <begin position="205"/>
        <end position="207"/>
    </location>
</feature>
<feature type="strand" evidence="6">
    <location>
        <begin position="213"/>
        <end position="217"/>
    </location>
</feature>
<feature type="strand" evidence="6">
    <location>
        <begin position="221"/>
        <end position="223"/>
    </location>
</feature>
<feature type="helix" evidence="6">
    <location>
        <begin position="225"/>
        <end position="231"/>
    </location>
</feature>
<feature type="turn" evidence="6">
    <location>
        <begin position="232"/>
        <end position="234"/>
    </location>
</feature>
<feature type="strand" evidence="6">
    <location>
        <begin position="236"/>
        <end position="239"/>
    </location>
</feature>
<feature type="helix" evidence="6">
    <location>
        <begin position="242"/>
        <end position="257"/>
    </location>
</feature>
<feature type="helix" evidence="6">
    <location>
        <begin position="264"/>
        <end position="274"/>
    </location>
</feature>